<proteinExistence type="inferred from homology"/>
<comment type="function">
    <text evidence="1">This enzyme is involved in nucleotide metabolism: it produces dUMP, the immediate precursor of thymidine nucleotides and it decreases the intracellular concentration of dUTP so that uracil cannot be incorporated into DNA.</text>
</comment>
<comment type="catalytic activity">
    <reaction evidence="1">
        <text>dUTP + H2O = dUMP + diphosphate + H(+)</text>
        <dbReference type="Rhea" id="RHEA:10248"/>
        <dbReference type="ChEBI" id="CHEBI:15377"/>
        <dbReference type="ChEBI" id="CHEBI:15378"/>
        <dbReference type="ChEBI" id="CHEBI:33019"/>
        <dbReference type="ChEBI" id="CHEBI:61555"/>
        <dbReference type="ChEBI" id="CHEBI:246422"/>
        <dbReference type="EC" id="3.6.1.23"/>
    </reaction>
</comment>
<comment type="cofactor">
    <cofactor evidence="1">
        <name>Mg(2+)</name>
        <dbReference type="ChEBI" id="CHEBI:18420"/>
    </cofactor>
</comment>
<comment type="pathway">
    <text evidence="1">Pyrimidine metabolism; dUMP biosynthesis; dUMP from dCTP (dUTP route): step 2/2.</text>
</comment>
<comment type="similarity">
    <text evidence="1">Belongs to the dUTPase family.</text>
</comment>
<name>DUT_BIFLD</name>
<dbReference type="EC" id="3.6.1.23" evidence="1"/>
<dbReference type="EMBL" id="CP000605">
    <property type="protein sequence ID" value="ACD97753.1"/>
    <property type="molecule type" value="Genomic_DNA"/>
</dbReference>
<dbReference type="RefSeq" id="WP_007055963.1">
    <property type="nucleotide sequence ID" value="NZ_AABM02000001.1"/>
</dbReference>
<dbReference type="SMR" id="B3DRA9"/>
<dbReference type="GeneID" id="69578389"/>
<dbReference type="KEGG" id="blj:BLD_0307"/>
<dbReference type="HOGENOM" id="CLU_068508_1_3_11"/>
<dbReference type="UniPathway" id="UPA00610">
    <property type="reaction ID" value="UER00666"/>
</dbReference>
<dbReference type="Proteomes" id="UP000002419">
    <property type="component" value="Chromosome"/>
</dbReference>
<dbReference type="GO" id="GO:0004170">
    <property type="term" value="F:dUTP diphosphatase activity"/>
    <property type="evidence" value="ECO:0007669"/>
    <property type="project" value="UniProtKB-UniRule"/>
</dbReference>
<dbReference type="GO" id="GO:0000287">
    <property type="term" value="F:magnesium ion binding"/>
    <property type="evidence" value="ECO:0007669"/>
    <property type="project" value="UniProtKB-UniRule"/>
</dbReference>
<dbReference type="GO" id="GO:0006226">
    <property type="term" value="P:dUMP biosynthetic process"/>
    <property type="evidence" value="ECO:0007669"/>
    <property type="project" value="UniProtKB-UniRule"/>
</dbReference>
<dbReference type="GO" id="GO:0046081">
    <property type="term" value="P:dUTP catabolic process"/>
    <property type="evidence" value="ECO:0007669"/>
    <property type="project" value="InterPro"/>
</dbReference>
<dbReference type="CDD" id="cd07557">
    <property type="entry name" value="trimeric_dUTPase"/>
    <property type="match status" value="1"/>
</dbReference>
<dbReference type="FunFam" id="2.70.40.10:FF:000008">
    <property type="entry name" value="Deoxyuridine 5'-triphosphate nucleotidohydrolase"/>
    <property type="match status" value="1"/>
</dbReference>
<dbReference type="Gene3D" id="2.70.40.10">
    <property type="match status" value="1"/>
</dbReference>
<dbReference type="HAMAP" id="MF_00116">
    <property type="entry name" value="dUTPase_bact"/>
    <property type="match status" value="1"/>
</dbReference>
<dbReference type="InterPro" id="IPR008181">
    <property type="entry name" value="dUTPase"/>
</dbReference>
<dbReference type="InterPro" id="IPR029054">
    <property type="entry name" value="dUTPase-like"/>
</dbReference>
<dbReference type="InterPro" id="IPR036157">
    <property type="entry name" value="dUTPase-like_sf"/>
</dbReference>
<dbReference type="InterPro" id="IPR033704">
    <property type="entry name" value="dUTPase_trimeric"/>
</dbReference>
<dbReference type="NCBIfam" id="TIGR00576">
    <property type="entry name" value="dut"/>
    <property type="match status" value="1"/>
</dbReference>
<dbReference type="NCBIfam" id="NF001862">
    <property type="entry name" value="PRK00601.1"/>
    <property type="match status" value="1"/>
</dbReference>
<dbReference type="PANTHER" id="PTHR11241">
    <property type="entry name" value="DEOXYURIDINE 5'-TRIPHOSPHATE NUCLEOTIDOHYDROLASE"/>
    <property type="match status" value="1"/>
</dbReference>
<dbReference type="PANTHER" id="PTHR11241:SF0">
    <property type="entry name" value="DEOXYURIDINE 5'-TRIPHOSPHATE NUCLEOTIDOHYDROLASE"/>
    <property type="match status" value="1"/>
</dbReference>
<dbReference type="Pfam" id="PF00692">
    <property type="entry name" value="dUTPase"/>
    <property type="match status" value="1"/>
</dbReference>
<dbReference type="SUPFAM" id="SSF51283">
    <property type="entry name" value="dUTPase-like"/>
    <property type="match status" value="1"/>
</dbReference>
<organism>
    <name type="scientific">Bifidobacterium longum (strain DJO10A)</name>
    <dbReference type="NCBI Taxonomy" id="205913"/>
    <lineage>
        <taxon>Bacteria</taxon>
        <taxon>Bacillati</taxon>
        <taxon>Actinomycetota</taxon>
        <taxon>Actinomycetes</taxon>
        <taxon>Bifidobacteriales</taxon>
        <taxon>Bifidobacteriaceae</taxon>
        <taxon>Bifidobacterium</taxon>
    </lineage>
</organism>
<keyword id="KW-0378">Hydrolase</keyword>
<keyword id="KW-0460">Magnesium</keyword>
<keyword id="KW-0479">Metal-binding</keyword>
<keyword id="KW-0546">Nucleotide metabolism</keyword>
<reference key="1">
    <citation type="journal article" date="2008" name="BMC Genomics">
        <title>Comparative genomic analysis of the gut bacterium Bifidobacterium longum reveals loci susceptible to deletion during pure culture growth.</title>
        <authorList>
            <person name="Lee J.H."/>
            <person name="Karamychev V.N."/>
            <person name="Kozyavkin S.A."/>
            <person name="Mills D."/>
            <person name="Pavlov A.R."/>
            <person name="Pavlova N.V."/>
            <person name="Polouchine N.N."/>
            <person name="Richardson P.M."/>
            <person name="Shakhova V.V."/>
            <person name="Slesarev A.I."/>
            <person name="Weimer B."/>
            <person name="O'Sullivan D.J."/>
        </authorList>
    </citation>
    <scope>NUCLEOTIDE SEQUENCE [LARGE SCALE GENOMIC DNA]</scope>
    <source>
        <strain>DJO10A</strain>
    </source>
</reference>
<gene>
    <name evidence="1" type="primary">dut</name>
    <name type="ordered locus">BLD_0307</name>
</gene>
<protein>
    <recommendedName>
        <fullName evidence="1">Deoxyuridine 5'-triphosphate nucleotidohydrolase</fullName>
        <shortName evidence="1">dUTPase</shortName>
        <ecNumber evidence="1">3.6.1.23</ecNumber>
    </recommendedName>
    <alternativeName>
        <fullName evidence="1">dUTP pyrophosphatase</fullName>
    </alternativeName>
</protein>
<accession>B3DRA9</accession>
<evidence type="ECO:0000255" key="1">
    <source>
        <dbReference type="HAMAP-Rule" id="MF_00116"/>
    </source>
</evidence>
<feature type="chain" id="PRO_1000094942" description="Deoxyuridine 5'-triphosphate nucleotidohydrolase">
    <location>
        <begin position="1"/>
        <end position="158"/>
    </location>
</feature>
<feature type="binding site" evidence="1">
    <location>
        <begin position="75"/>
        <end position="77"/>
    </location>
    <ligand>
        <name>substrate</name>
    </ligand>
</feature>
<feature type="binding site" evidence="1">
    <location>
        <position position="88"/>
    </location>
    <ligand>
        <name>substrate</name>
    </ligand>
</feature>
<feature type="binding site" evidence="1">
    <location>
        <begin position="92"/>
        <end position="94"/>
    </location>
    <ligand>
        <name>substrate</name>
    </ligand>
</feature>
<feature type="binding site" evidence="1">
    <location>
        <position position="102"/>
    </location>
    <ligand>
        <name>substrate</name>
    </ligand>
</feature>
<sequence length="158" mass="16747">MAFDETYNEPESTEVLVKSLDPEHPAQLHYAHAGDAGADLITTVDVTLKPFERALVPTGVAIALPAGYVALVHPRSGLAAKQGVTVLNAPGTVDAGYRGEIKVPLINLDPKHTAVFHPGDRIAQLVIQRYVEARFIPAETLPGSDRAERGFGSTGVAS</sequence>